<organism>
    <name type="scientific">Schizosaccharomyces pombe (strain 972 / ATCC 24843)</name>
    <name type="common">Fission yeast</name>
    <dbReference type="NCBI Taxonomy" id="284812"/>
    <lineage>
        <taxon>Eukaryota</taxon>
        <taxon>Fungi</taxon>
        <taxon>Dikarya</taxon>
        <taxon>Ascomycota</taxon>
        <taxon>Taphrinomycotina</taxon>
        <taxon>Schizosaccharomycetes</taxon>
        <taxon>Schizosaccharomycetales</taxon>
        <taxon>Schizosaccharomycetaceae</taxon>
        <taxon>Schizosaccharomyces</taxon>
    </lineage>
</organism>
<feature type="chain" id="PRO_0000317100" description="Uncharacterized protein C576.02">
    <location>
        <begin position="1"/>
        <end position="236"/>
    </location>
</feature>
<sequence>MPTILVINPNSSTFITTSMEEKLVPLVPSDVKLRFLTCPQPGAAVIDSITEATLTAALVFQALTPSVLDGVDAIAVACYSPTPLVDMIRESFALPCMGIVQASVLSALSVGQRIGILTSTYRSECLLYELLDSFGVSRTRVAAIASTGRTVLQLSQMPSQERETLLVQKAQELANTKGADVICLGGAALAAIRDQIQVAVGPNIPIIDGVHAAVELLAGLARQNLHTSKFGIYTYP</sequence>
<evidence type="ECO:0000269" key="1">
    <source>
    </source>
</evidence>
<evidence type="ECO:0000305" key="2"/>
<gene>
    <name type="ORF">SPCC576.02</name>
</gene>
<reference key="1">
    <citation type="journal article" date="2002" name="Nature">
        <title>The genome sequence of Schizosaccharomyces pombe.</title>
        <authorList>
            <person name="Wood V."/>
            <person name="Gwilliam R."/>
            <person name="Rajandream M.A."/>
            <person name="Lyne M.H."/>
            <person name="Lyne R."/>
            <person name="Stewart A."/>
            <person name="Sgouros J.G."/>
            <person name="Peat N."/>
            <person name="Hayles J."/>
            <person name="Baker S.G."/>
            <person name="Basham D."/>
            <person name="Bowman S."/>
            <person name="Brooks K."/>
            <person name="Brown D."/>
            <person name="Brown S."/>
            <person name="Chillingworth T."/>
            <person name="Churcher C.M."/>
            <person name="Collins M."/>
            <person name="Connor R."/>
            <person name="Cronin A."/>
            <person name="Davis P."/>
            <person name="Feltwell T."/>
            <person name="Fraser A."/>
            <person name="Gentles S."/>
            <person name="Goble A."/>
            <person name="Hamlin N."/>
            <person name="Harris D.E."/>
            <person name="Hidalgo J."/>
            <person name="Hodgson G."/>
            <person name="Holroyd S."/>
            <person name="Hornsby T."/>
            <person name="Howarth S."/>
            <person name="Huckle E.J."/>
            <person name="Hunt S."/>
            <person name="Jagels K."/>
            <person name="James K.D."/>
            <person name="Jones L."/>
            <person name="Jones M."/>
            <person name="Leather S."/>
            <person name="McDonald S."/>
            <person name="McLean J."/>
            <person name="Mooney P."/>
            <person name="Moule S."/>
            <person name="Mungall K.L."/>
            <person name="Murphy L.D."/>
            <person name="Niblett D."/>
            <person name="Odell C."/>
            <person name="Oliver K."/>
            <person name="O'Neil S."/>
            <person name="Pearson D."/>
            <person name="Quail M.A."/>
            <person name="Rabbinowitsch E."/>
            <person name="Rutherford K.M."/>
            <person name="Rutter S."/>
            <person name="Saunders D."/>
            <person name="Seeger K."/>
            <person name="Sharp S."/>
            <person name="Skelton J."/>
            <person name="Simmonds M.N."/>
            <person name="Squares R."/>
            <person name="Squares S."/>
            <person name="Stevens K."/>
            <person name="Taylor K."/>
            <person name="Taylor R.G."/>
            <person name="Tivey A."/>
            <person name="Walsh S.V."/>
            <person name="Warren T."/>
            <person name="Whitehead S."/>
            <person name="Woodward J.R."/>
            <person name="Volckaert G."/>
            <person name="Aert R."/>
            <person name="Robben J."/>
            <person name="Grymonprez B."/>
            <person name="Weltjens I."/>
            <person name="Vanstreels E."/>
            <person name="Rieger M."/>
            <person name="Schaefer M."/>
            <person name="Mueller-Auer S."/>
            <person name="Gabel C."/>
            <person name="Fuchs M."/>
            <person name="Duesterhoeft A."/>
            <person name="Fritzc C."/>
            <person name="Holzer E."/>
            <person name="Moestl D."/>
            <person name="Hilbert H."/>
            <person name="Borzym K."/>
            <person name="Langer I."/>
            <person name="Beck A."/>
            <person name="Lehrach H."/>
            <person name="Reinhardt R."/>
            <person name="Pohl T.M."/>
            <person name="Eger P."/>
            <person name="Zimmermann W."/>
            <person name="Wedler H."/>
            <person name="Wambutt R."/>
            <person name="Purnelle B."/>
            <person name="Goffeau A."/>
            <person name="Cadieu E."/>
            <person name="Dreano S."/>
            <person name="Gloux S."/>
            <person name="Lelaure V."/>
            <person name="Mottier S."/>
            <person name="Galibert F."/>
            <person name="Aves S.J."/>
            <person name="Xiang Z."/>
            <person name="Hunt C."/>
            <person name="Moore K."/>
            <person name="Hurst S.M."/>
            <person name="Lucas M."/>
            <person name="Rochet M."/>
            <person name="Gaillardin C."/>
            <person name="Tallada V.A."/>
            <person name="Garzon A."/>
            <person name="Thode G."/>
            <person name="Daga R.R."/>
            <person name="Cruzado L."/>
            <person name="Jimenez J."/>
            <person name="Sanchez M."/>
            <person name="del Rey F."/>
            <person name="Benito J."/>
            <person name="Dominguez A."/>
            <person name="Revuelta J.L."/>
            <person name="Moreno S."/>
            <person name="Armstrong J."/>
            <person name="Forsburg S.L."/>
            <person name="Cerutti L."/>
            <person name="Lowe T."/>
            <person name="McCombie W.R."/>
            <person name="Paulsen I."/>
            <person name="Potashkin J."/>
            <person name="Shpakovski G.V."/>
            <person name="Ussery D."/>
            <person name="Barrell B.G."/>
            <person name="Nurse P."/>
        </authorList>
    </citation>
    <scope>NUCLEOTIDE SEQUENCE [LARGE SCALE GENOMIC DNA]</scope>
    <source>
        <strain>972 / ATCC 24843</strain>
    </source>
</reference>
<reference key="2">
    <citation type="journal article" date="2006" name="Nat. Biotechnol.">
        <title>ORFeome cloning and global analysis of protein localization in the fission yeast Schizosaccharomyces pombe.</title>
        <authorList>
            <person name="Matsuyama A."/>
            <person name="Arai R."/>
            <person name="Yashiroda Y."/>
            <person name="Shirai A."/>
            <person name="Kamata A."/>
            <person name="Sekido S."/>
            <person name="Kobayashi Y."/>
            <person name="Hashimoto A."/>
            <person name="Hamamoto M."/>
            <person name="Hiraoka Y."/>
            <person name="Horinouchi S."/>
            <person name="Yoshida M."/>
        </authorList>
    </citation>
    <scope>SUBCELLULAR LOCATION [LARGE SCALE ANALYSIS]</scope>
</reference>
<proteinExistence type="inferred from homology"/>
<comment type="subcellular location">
    <subcellularLocation>
        <location evidence="1">Cytoplasm</location>
    </subcellularLocation>
</comment>
<comment type="similarity">
    <text evidence="2">Belongs to the HyuE racemase family.</text>
</comment>
<protein>
    <recommendedName>
        <fullName>Uncharacterized protein C576.02</fullName>
    </recommendedName>
</protein>
<accession>O74886</accession>
<dbReference type="EMBL" id="CU329672">
    <property type="protein sequence ID" value="CAA21181.1"/>
    <property type="molecule type" value="Genomic_DNA"/>
</dbReference>
<dbReference type="PIR" id="T41412">
    <property type="entry name" value="T41412"/>
</dbReference>
<dbReference type="RefSeq" id="NP_588429.1">
    <property type="nucleotide sequence ID" value="NM_001023420.2"/>
</dbReference>
<dbReference type="SMR" id="O74886"/>
<dbReference type="BioGRID" id="276093">
    <property type="interactions" value="26"/>
</dbReference>
<dbReference type="FunCoup" id="O74886">
    <property type="interactions" value="5"/>
</dbReference>
<dbReference type="STRING" id="284812.O74886"/>
<dbReference type="PaxDb" id="4896-SPCC576.02.1"/>
<dbReference type="EnsemblFungi" id="SPCC576.02.1">
    <property type="protein sequence ID" value="SPCC576.02.1:pep"/>
    <property type="gene ID" value="SPCC576.02"/>
</dbReference>
<dbReference type="PomBase" id="SPCC576.02"/>
<dbReference type="VEuPathDB" id="FungiDB:SPCC576.02"/>
<dbReference type="eggNOG" id="KOG0806">
    <property type="taxonomic scope" value="Eukaryota"/>
</dbReference>
<dbReference type="HOGENOM" id="CLU_053002_1_0_1"/>
<dbReference type="InParanoid" id="O74886"/>
<dbReference type="OMA" id="FARPPRK"/>
<dbReference type="PhylomeDB" id="O74886"/>
<dbReference type="PRO" id="PR:O74886"/>
<dbReference type="Proteomes" id="UP000002485">
    <property type="component" value="Chromosome III"/>
</dbReference>
<dbReference type="GO" id="GO:0005737">
    <property type="term" value="C:cytoplasm"/>
    <property type="evidence" value="ECO:0007005"/>
    <property type="project" value="PomBase"/>
</dbReference>
<dbReference type="GO" id="GO:0047661">
    <property type="term" value="F:amino-acid racemase activity"/>
    <property type="evidence" value="ECO:0007669"/>
    <property type="project" value="InterPro"/>
</dbReference>
<dbReference type="Gene3D" id="3.40.50.12500">
    <property type="match status" value="1"/>
</dbReference>
<dbReference type="InterPro" id="IPR015942">
    <property type="entry name" value="Asp/Glu/hydantoin_racemase"/>
</dbReference>
<dbReference type="InterPro" id="IPR052186">
    <property type="entry name" value="Hydantoin_racemase-like"/>
</dbReference>
<dbReference type="InterPro" id="IPR053714">
    <property type="entry name" value="Iso_Racemase_Enz_sf"/>
</dbReference>
<dbReference type="PANTHER" id="PTHR28047:SF7">
    <property type="entry name" value="HYDANTOIN RACEMASE FAMILY PROTEIN"/>
    <property type="match status" value="1"/>
</dbReference>
<dbReference type="PANTHER" id="PTHR28047">
    <property type="entry name" value="PROTEIN DCG1"/>
    <property type="match status" value="1"/>
</dbReference>
<dbReference type="Pfam" id="PF01177">
    <property type="entry name" value="Asp_Glu_race"/>
    <property type="match status" value="1"/>
</dbReference>
<name>YQE2_SCHPO</name>
<keyword id="KW-0963">Cytoplasm</keyword>
<keyword id="KW-1185">Reference proteome</keyword>